<organism>
    <name type="scientific">Arabidopsis thaliana</name>
    <name type="common">Mouse-ear cress</name>
    <dbReference type="NCBI Taxonomy" id="3702"/>
    <lineage>
        <taxon>Eukaryota</taxon>
        <taxon>Viridiplantae</taxon>
        <taxon>Streptophyta</taxon>
        <taxon>Embryophyta</taxon>
        <taxon>Tracheophyta</taxon>
        <taxon>Spermatophyta</taxon>
        <taxon>Magnoliopsida</taxon>
        <taxon>eudicotyledons</taxon>
        <taxon>Gunneridae</taxon>
        <taxon>Pentapetalae</taxon>
        <taxon>rosids</taxon>
        <taxon>malvids</taxon>
        <taxon>Brassicales</taxon>
        <taxon>Brassicaceae</taxon>
        <taxon>Camelineae</taxon>
        <taxon>Arabidopsis</taxon>
    </lineage>
</organism>
<accession>Q9LX51</accession>
<feature type="chain" id="PRO_0000281964" description="F-box/LRR-repeat protein At3g59200">
    <location>
        <begin position="1"/>
        <end position="520"/>
    </location>
</feature>
<feature type="domain" description="F-box" evidence="1">
    <location>
        <begin position="6"/>
        <end position="54"/>
    </location>
</feature>
<feature type="repeat" description="LRR 1">
    <location>
        <begin position="170"/>
        <end position="197"/>
    </location>
</feature>
<feature type="repeat" description="LRR 2">
    <location>
        <begin position="219"/>
        <end position="244"/>
    </location>
</feature>
<feature type="repeat" description="LRR 3">
    <location>
        <begin position="340"/>
        <end position="365"/>
    </location>
</feature>
<dbReference type="EMBL" id="AL356014">
    <property type="protein sequence ID" value="CAB91590.1"/>
    <property type="molecule type" value="Genomic_DNA"/>
</dbReference>
<dbReference type="EMBL" id="CP002686">
    <property type="protein sequence ID" value="AEE79888.1"/>
    <property type="molecule type" value="Genomic_DNA"/>
</dbReference>
<dbReference type="EMBL" id="AK117886">
    <property type="protein sequence ID" value="BAC42525.1"/>
    <property type="molecule type" value="mRNA"/>
</dbReference>
<dbReference type="EMBL" id="BT005902">
    <property type="protein sequence ID" value="AAO64837.1"/>
    <property type="molecule type" value="mRNA"/>
</dbReference>
<dbReference type="PIR" id="T48988">
    <property type="entry name" value="T48988"/>
</dbReference>
<dbReference type="RefSeq" id="NP_191479.1">
    <property type="nucleotide sequence ID" value="NM_115782.3"/>
</dbReference>
<dbReference type="BioGRID" id="10404">
    <property type="interactions" value="7"/>
</dbReference>
<dbReference type="FunCoup" id="Q9LX51">
    <property type="interactions" value="79"/>
</dbReference>
<dbReference type="IntAct" id="Q9LX51">
    <property type="interactions" value="2"/>
</dbReference>
<dbReference type="STRING" id="3702.Q9LX51"/>
<dbReference type="PaxDb" id="3702-AT3G59200.1"/>
<dbReference type="ProteomicsDB" id="222432"/>
<dbReference type="EnsemblPlants" id="AT3G59200.1">
    <property type="protein sequence ID" value="AT3G59200.1"/>
    <property type="gene ID" value="AT3G59200"/>
</dbReference>
<dbReference type="GeneID" id="825089"/>
<dbReference type="Gramene" id="AT3G59200.1">
    <property type="protein sequence ID" value="AT3G59200.1"/>
    <property type="gene ID" value="AT3G59200"/>
</dbReference>
<dbReference type="KEGG" id="ath:AT3G59200"/>
<dbReference type="Araport" id="AT3G59200"/>
<dbReference type="TAIR" id="AT3G59200"/>
<dbReference type="eggNOG" id="ENOG502RRGR">
    <property type="taxonomic scope" value="Eukaryota"/>
</dbReference>
<dbReference type="HOGENOM" id="CLU_010721_7_4_1"/>
<dbReference type="InParanoid" id="Q9LX51"/>
<dbReference type="PhylomeDB" id="Q9LX51"/>
<dbReference type="PRO" id="PR:Q9LX51"/>
<dbReference type="Proteomes" id="UP000006548">
    <property type="component" value="Chromosome 3"/>
</dbReference>
<dbReference type="ExpressionAtlas" id="Q9LX51">
    <property type="expression patterns" value="baseline and differential"/>
</dbReference>
<dbReference type="CDD" id="cd22160">
    <property type="entry name" value="F-box_AtFBL13-like"/>
    <property type="match status" value="1"/>
</dbReference>
<dbReference type="Gene3D" id="1.20.1280.50">
    <property type="match status" value="1"/>
</dbReference>
<dbReference type="Gene3D" id="3.80.10.10">
    <property type="entry name" value="Ribonuclease Inhibitor"/>
    <property type="match status" value="1"/>
</dbReference>
<dbReference type="InterPro" id="IPR036047">
    <property type="entry name" value="F-box-like_dom_sf"/>
</dbReference>
<dbReference type="InterPro" id="IPR053781">
    <property type="entry name" value="F-box_AtFBL13-like"/>
</dbReference>
<dbReference type="InterPro" id="IPR001810">
    <property type="entry name" value="F-box_dom"/>
</dbReference>
<dbReference type="InterPro" id="IPR006566">
    <property type="entry name" value="FBD"/>
</dbReference>
<dbReference type="InterPro" id="IPR055294">
    <property type="entry name" value="FBL60-like"/>
</dbReference>
<dbReference type="InterPro" id="IPR032675">
    <property type="entry name" value="LRR_dom_sf"/>
</dbReference>
<dbReference type="InterPro" id="IPR055411">
    <property type="entry name" value="LRR_FXL15/At3g58940/PEG3-like"/>
</dbReference>
<dbReference type="PANTHER" id="PTHR31293">
    <property type="entry name" value="RNI-LIKE SUPERFAMILY PROTEIN"/>
    <property type="match status" value="1"/>
</dbReference>
<dbReference type="PANTHER" id="PTHR31293:SF12">
    <property type="entry name" value="RNI-LIKE SUPERFAMILY PROTEIN"/>
    <property type="match status" value="1"/>
</dbReference>
<dbReference type="Pfam" id="PF00646">
    <property type="entry name" value="F-box"/>
    <property type="match status" value="1"/>
</dbReference>
<dbReference type="Pfam" id="PF24758">
    <property type="entry name" value="LRR_At5g56370"/>
    <property type="match status" value="1"/>
</dbReference>
<dbReference type="SMART" id="SM00579">
    <property type="entry name" value="FBD"/>
    <property type="match status" value="1"/>
</dbReference>
<dbReference type="SUPFAM" id="SSF81383">
    <property type="entry name" value="F-box domain"/>
    <property type="match status" value="1"/>
</dbReference>
<dbReference type="SUPFAM" id="SSF52047">
    <property type="entry name" value="RNI-like"/>
    <property type="match status" value="1"/>
</dbReference>
<dbReference type="PROSITE" id="PS50181">
    <property type="entry name" value="FBOX"/>
    <property type="match status" value="1"/>
</dbReference>
<sequence>MDFVSRDRISSLPNPVVSHILSFLPTKEAASTSVLSKKWRYLFAYVTNLDFDDSDYQDGKPKSDVELSRSFMEFVDRVLALQGNGSVNKFSLECSNYDVDLARVTGWILNVLGRGVSELDLSILEYPLPSEIFVSKTLVRLKLGPANDLTLTLDRKDVFLPKLKTLYIDCVDVQERGFGFVKLLSGCPVLEELVLMNIGWENWKFCSVSVKTLKRLTFFCEETYENPKSVSFDTPNLVYLEYSDAIASKYPKVNFNSLVEAHIGLRLTEDQSGDADFSEEDYFSEGDEKKQMVGNATDFLKGISTVQILYLSAQAIEVLTFCCEPIPVFNNLIQLTIENNSEIRWDSLPGLLKNCPNLETLVLKRLLHKYNKACGNVCCCKRPKQPSCLSSSPVKVLKIFLFDDNDEEDGSEMRQIKYFLEKMPRLEELVVYYNTAYDPAVLELSKKLQKIPKIASPKCKIQVISENLSLSSTVPSFLTTRWSSLPPEEAYPWVDSPPPQIIDPMLEYGSPPEDDDSWLY</sequence>
<proteinExistence type="evidence at transcript level"/>
<gene>
    <name type="ordered locus">At3g59200</name>
    <name type="ORF">F25L23.60</name>
</gene>
<evidence type="ECO:0000255" key="1">
    <source>
        <dbReference type="PROSITE-ProRule" id="PRU00080"/>
    </source>
</evidence>
<protein>
    <recommendedName>
        <fullName>F-box/LRR-repeat protein At3g59200</fullName>
    </recommendedName>
</protein>
<name>FBL64_ARATH</name>
<keyword id="KW-0433">Leucine-rich repeat</keyword>
<keyword id="KW-1185">Reference proteome</keyword>
<keyword id="KW-0677">Repeat</keyword>
<reference key="1">
    <citation type="journal article" date="2000" name="Nature">
        <title>Sequence and analysis of chromosome 3 of the plant Arabidopsis thaliana.</title>
        <authorList>
            <person name="Salanoubat M."/>
            <person name="Lemcke K."/>
            <person name="Rieger M."/>
            <person name="Ansorge W."/>
            <person name="Unseld M."/>
            <person name="Fartmann B."/>
            <person name="Valle G."/>
            <person name="Bloecker H."/>
            <person name="Perez-Alonso M."/>
            <person name="Obermaier B."/>
            <person name="Delseny M."/>
            <person name="Boutry M."/>
            <person name="Grivell L.A."/>
            <person name="Mache R."/>
            <person name="Puigdomenech P."/>
            <person name="De Simone V."/>
            <person name="Choisne N."/>
            <person name="Artiguenave F."/>
            <person name="Robert C."/>
            <person name="Brottier P."/>
            <person name="Wincker P."/>
            <person name="Cattolico L."/>
            <person name="Weissenbach J."/>
            <person name="Saurin W."/>
            <person name="Quetier F."/>
            <person name="Schaefer M."/>
            <person name="Mueller-Auer S."/>
            <person name="Gabel C."/>
            <person name="Fuchs M."/>
            <person name="Benes V."/>
            <person name="Wurmbach E."/>
            <person name="Drzonek H."/>
            <person name="Erfle H."/>
            <person name="Jordan N."/>
            <person name="Bangert S."/>
            <person name="Wiedelmann R."/>
            <person name="Kranz H."/>
            <person name="Voss H."/>
            <person name="Holland R."/>
            <person name="Brandt P."/>
            <person name="Nyakatura G."/>
            <person name="Vezzi A."/>
            <person name="D'Angelo M."/>
            <person name="Pallavicini A."/>
            <person name="Toppo S."/>
            <person name="Simionati B."/>
            <person name="Conrad A."/>
            <person name="Hornischer K."/>
            <person name="Kauer G."/>
            <person name="Loehnert T.-H."/>
            <person name="Nordsiek G."/>
            <person name="Reichelt J."/>
            <person name="Scharfe M."/>
            <person name="Schoen O."/>
            <person name="Bargues M."/>
            <person name="Terol J."/>
            <person name="Climent J."/>
            <person name="Navarro P."/>
            <person name="Collado C."/>
            <person name="Perez-Perez A."/>
            <person name="Ottenwaelder B."/>
            <person name="Duchemin D."/>
            <person name="Cooke R."/>
            <person name="Laudie M."/>
            <person name="Berger-Llauro C."/>
            <person name="Purnelle B."/>
            <person name="Masuy D."/>
            <person name="de Haan M."/>
            <person name="Maarse A.C."/>
            <person name="Alcaraz J.-P."/>
            <person name="Cottet A."/>
            <person name="Casacuberta E."/>
            <person name="Monfort A."/>
            <person name="Argiriou A."/>
            <person name="Flores M."/>
            <person name="Liguori R."/>
            <person name="Vitale D."/>
            <person name="Mannhaupt G."/>
            <person name="Haase D."/>
            <person name="Schoof H."/>
            <person name="Rudd S."/>
            <person name="Zaccaria P."/>
            <person name="Mewes H.-W."/>
            <person name="Mayer K.F.X."/>
            <person name="Kaul S."/>
            <person name="Town C.D."/>
            <person name="Koo H.L."/>
            <person name="Tallon L.J."/>
            <person name="Jenkins J."/>
            <person name="Rooney T."/>
            <person name="Rizzo M."/>
            <person name="Walts A."/>
            <person name="Utterback T."/>
            <person name="Fujii C.Y."/>
            <person name="Shea T.P."/>
            <person name="Creasy T.H."/>
            <person name="Haas B."/>
            <person name="Maiti R."/>
            <person name="Wu D."/>
            <person name="Peterson J."/>
            <person name="Van Aken S."/>
            <person name="Pai G."/>
            <person name="Militscher J."/>
            <person name="Sellers P."/>
            <person name="Gill J.E."/>
            <person name="Feldblyum T.V."/>
            <person name="Preuss D."/>
            <person name="Lin X."/>
            <person name="Nierman W.C."/>
            <person name="Salzberg S.L."/>
            <person name="White O."/>
            <person name="Venter J.C."/>
            <person name="Fraser C.M."/>
            <person name="Kaneko T."/>
            <person name="Nakamura Y."/>
            <person name="Sato S."/>
            <person name="Kato T."/>
            <person name="Asamizu E."/>
            <person name="Sasamoto S."/>
            <person name="Kimura T."/>
            <person name="Idesawa K."/>
            <person name="Kawashima K."/>
            <person name="Kishida Y."/>
            <person name="Kiyokawa C."/>
            <person name="Kohara M."/>
            <person name="Matsumoto M."/>
            <person name="Matsuno A."/>
            <person name="Muraki A."/>
            <person name="Nakayama S."/>
            <person name="Nakazaki N."/>
            <person name="Shinpo S."/>
            <person name="Takeuchi C."/>
            <person name="Wada T."/>
            <person name="Watanabe A."/>
            <person name="Yamada M."/>
            <person name="Yasuda M."/>
            <person name="Tabata S."/>
        </authorList>
    </citation>
    <scope>NUCLEOTIDE SEQUENCE [LARGE SCALE GENOMIC DNA]</scope>
    <source>
        <strain>cv. Columbia</strain>
    </source>
</reference>
<reference key="2">
    <citation type="journal article" date="2017" name="Plant J.">
        <title>Araport11: a complete reannotation of the Arabidopsis thaliana reference genome.</title>
        <authorList>
            <person name="Cheng C.Y."/>
            <person name="Krishnakumar V."/>
            <person name="Chan A.P."/>
            <person name="Thibaud-Nissen F."/>
            <person name="Schobel S."/>
            <person name="Town C.D."/>
        </authorList>
    </citation>
    <scope>GENOME REANNOTATION</scope>
    <source>
        <strain>cv. Columbia</strain>
    </source>
</reference>
<reference key="3">
    <citation type="journal article" date="2002" name="Science">
        <title>Functional annotation of a full-length Arabidopsis cDNA collection.</title>
        <authorList>
            <person name="Seki M."/>
            <person name="Narusaka M."/>
            <person name="Kamiya A."/>
            <person name="Ishida J."/>
            <person name="Satou M."/>
            <person name="Sakurai T."/>
            <person name="Nakajima M."/>
            <person name="Enju A."/>
            <person name="Akiyama K."/>
            <person name="Oono Y."/>
            <person name="Muramatsu M."/>
            <person name="Hayashizaki Y."/>
            <person name="Kawai J."/>
            <person name="Carninci P."/>
            <person name="Itoh M."/>
            <person name="Ishii Y."/>
            <person name="Arakawa T."/>
            <person name="Shibata K."/>
            <person name="Shinagawa A."/>
            <person name="Shinozaki K."/>
        </authorList>
    </citation>
    <scope>NUCLEOTIDE SEQUENCE [LARGE SCALE MRNA]</scope>
    <source>
        <strain>cv. Columbia</strain>
    </source>
</reference>
<reference key="4">
    <citation type="journal article" date="2003" name="Science">
        <title>Empirical analysis of transcriptional activity in the Arabidopsis genome.</title>
        <authorList>
            <person name="Yamada K."/>
            <person name="Lim J."/>
            <person name="Dale J.M."/>
            <person name="Chen H."/>
            <person name="Shinn P."/>
            <person name="Palm C.J."/>
            <person name="Southwick A.M."/>
            <person name="Wu H.C."/>
            <person name="Kim C.J."/>
            <person name="Nguyen M."/>
            <person name="Pham P.K."/>
            <person name="Cheuk R.F."/>
            <person name="Karlin-Newmann G."/>
            <person name="Liu S.X."/>
            <person name="Lam B."/>
            <person name="Sakano H."/>
            <person name="Wu T."/>
            <person name="Yu G."/>
            <person name="Miranda M."/>
            <person name="Quach H.L."/>
            <person name="Tripp M."/>
            <person name="Chang C.H."/>
            <person name="Lee J.M."/>
            <person name="Toriumi M.J."/>
            <person name="Chan M.M."/>
            <person name="Tang C.C."/>
            <person name="Onodera C.S."/>
            <person name="Deng J.M."/>
            <person name="Akiyama K."/>
            <person name="Ansari Y."/>
            <person name="Arakawa T."/>
            <person name="Banh J."/>
            <person name="Banno F."/>
            <person name="Bowser L."/>
            <person name="Brooks S.Y."/>
            <person name="Carninci P."/>
            <person name="Chao Q."/>
            <person name="Choy N."/>
            <person name="Enju A."/>
            <person name="Goldsmith A.D."/>
            <person name="Gurjal M."/>
            <person name="Hansen N.F."/>
            <person name="Hayashizaki Y."/>
            <person name="Johnson-Hopson C."/>
            <person name="Hsuan V.W."/>
            <person name="Iida K."/>
            <person name="Karnes M."/>
            <person name="Khan S."/>
            <person name="Koesema E."/>
            <person name="Ishida J."/>
            <person name="Jiang P.X."/>
            <person name="Jones T."/>
            <person name="Kawai J."/>
            <person name="Kamiya A."/>
            <person name="Meyers C."/>
            <person name="Nakajima M."/>
            <person name="Narusaka M."/>
            <person name="Seki M."/>
            <person name="Sakurai T."/>
            <person name="Satou M."/>
            <person name="Tamse R."/>
            <person name="Vaysberg M."/>
            <person name="Wallender E.K."/>
            <person name="Wong C."/>
            <person name="Yamamura Y."/>
            <person name="Yuan S."/>
            <person name="Shinozaki K."/>
            <person name="Davis R.W."/>
            <person name="Theologis A."/>
            <person name="Ecker J.R."/>
        </authorList>
    </citation>
    <scope>NUCLEOTIDE SEQUENCE [LARGE SCALE MRNA]</scope>
    <source>
        <strain>cv. Columbia</strain>
    </source>
</reference>